<accession>Q6FXJ5</accession>
<sequence>MSTTTTIPGAAPKKKRNRIPLSCTICRKRKVKCDKTRPHCNQCTKTGVAHLCHYMEQNWAQDAKKEISKDNELKNLKERCKILEEKLARYMHNPAVTASLGASVVNSPVGLSSPVDAPIKLTNSPMVKLEDDTNMVDDMARPVKEHDYDELDLTRQFDLLHIKSNGTIHLGATHWLAIMKGDPYLKLLWTHIFTMREKLLEYYTNGSGHKRRKRQKNGGKCPIDHSKFKAAESEQKNHFVKTTPMVNDTPKSSIGKCPIDHRAMSNPVGVNSNAGQFQPMHPPHTHIVQNKCPVDHKVNDSNLTSANTDNKNAATKKCPINHSKYTKEKMQGAGLNDKPLTKQEVIEKLCQLLPPKRIIMLYIDKFFKHFYPVIPILDELNFKNNINQIFDLNSLISNTIMSTSSDLELEPITSMTLNKPTDYSNLGILIIIMRLVWLSLPMNSCKIDIENPLLNKLRTDHDFKNEDYESGSLASSLRLKDELQLLKYEVDGFALDLVKKHLIKFDEISSISNTNVNMSTIQFAVFFKFYLMNCANASSQGNSAGNFDNESHQILLSSIMMMAFSCGLHRDPDNFPQLNVVSANLTTDNTRSGPPSNSNRNGSETPSVSPKDTNVSIERAKHTWRKVWYYIVSLDVQQSLLLGSPRLIRNLNDISDTKLPSASKIDYVKDIKELIIIKNYTLFYQLDLCIVAVLNHTLNISIAKNVRKFELDALISNLQKLTDGEKGINDVINSLINHGLLSTSEVPIGLQKFDDIYDLPRMEDILLARKSEQEIVGDENERIGQDVDKKLDLPHEMTSKALFFSKHMTLRMLLYLLNYILFTHYEPLGAEDPTTTILAKNYAQKALDYALDGYRNCMLYFVGVSDQNPLFKYMNVILCFHSLDIGHRALQFIICLILRVKCGPLNGLKETQTIFGTSVPSSCNSSSVEDENTEEPNNLNQDNQFQDDLMQNINLDNSDSLAEKLMSRMVLFKQLTEKLAPKYSFSVRVMKSTGFFISLLTTPSGSFGSKKNGSKHKHGVGKLLLSNWKHPKISNIPALLSSDSDQLKKCPVYQDALGFMPSRPSVTNLPSISNVEGLLPNAQANGRMTPQLPPIRSYQPITYSSSHMRVTPNSESDARKLGPDSHQVTNPLIPSPLSPANQQQNQVNVLHMHQQRSMSPAPMPMMNPTAMTTNQNMIPERKYAPHSGAATPILPGTNSDIQQQTQMTRNDPYPTEQFSLPPISSAKNNMAWGTTPESEQGDHLTPNTTTSSLDTPDFEDFIIQNSNFNGLLINPNSLAEAMGSLPSGRDGAILNVNSFKDFTTSTNDKTITPNSADQTDLFSVDMASTDFLPIDNFAIDGFMDSANLDIGSIWE</sequence>
<name>MAR1_CANGA</name>
<protein>
    <recommendedName>
        <fullName evidence="4">Transcription factor MAR1</fullName>
    </recommendedName>
    <alternativeName>
        <fullName evidence="4">Multiple azole resistance protein 1</fullName>
    </alternativeName>
</protein>
<proteinExistence type="evidence at protein level"/>
<feature type="chain" id="PRO_0000459088" description="Transcription factor MAR1">
    <location>
        <begin position="1"/>
        <end position="1355"/>
    </location>
</feature>
<feature type="DNA-binding region" description="Zn(2)-C6 fungal-type" evidence="1">
    <location>
        <begin position="23"/>
        <end position="52"/>
    </location>
</feature>
<feature type="region of interest" description="Disordered" evidence="2">
    <location>
        <begin position="586"/>
        <end position="614"/>
    </location>
</feature>
<feature type="region of interest" description="Disordered" evidence="2">
    <location>
        <begin position="918"/>
        <end position="942"/>
    </location>
</feature>
<feature type="region of interest" description="Disordered" evidence="2">
    <location>
        <begin position="1221"/>
        <end position="1253"/>
    </location>
</feature>
<feature type="compositionally biased region" description="Low complexity" evidence="2">
    <location>
        <begin position="589"/>
        <end position="603"/>
    </location>
</feature>
<feature type="compositionally biased region" description="Polar residues" evidence="2">
    <location>
        <begin position="604"/>
        <end position="614"/>
    </location>
</feature>
<feature type="compositionally biased region" description="Low complexity" evidence="2">
    <location>
        <begin position="918"/>
        <end position="927"/>
    </location>
</feature>
<feature type="compositionally biased region" description="Polar residues" evidence="2">
    <location>
        <begin position="1225"/>
        <end position="1238"/>
    </location>
</feature>
<evidence type="ECO:0000255" key="1">
    <source>
        <dbReference type="PROSITE-ProRule" id="PRU00227"/>
    </source>
</evidence>
<evidence type="ECO:0000256" key="2">
    <source>
        <dbReference type="SAM" id="MobiDB-lite"/>
    </source>
</evidence>
<evidence type="ECO:0000269" key="3">
    <source>
    </source>
</evidence>
<evidence type="ECO:0000303" key="4">
    <source>
    </source>
</evidence>
<gene>
    <name evidence="4" type="primary">MAR1</name>
    <name type="ordered locus">CAGL0B03421g</name>
</gene>
<organism>
    <name type="scientific">Candida glabrata (strain ATCC 2001 / BCRC 20586 / JCM 3761 / NBRC 0622 / NRRL Y-65 / CBS 138)</name>
    <name type="common">Yeast</name>
    <name type="synonym">Nakaseomyces glabratus</name>
    <dbReference type="NCBI Taxonomy" id="284593"/>
    <lineage>
        <taxon>Eukaryota</taxon>
        <taxon>Fungi</taxon>
        <taxon>Dikarya</taxon>
        <taxon>Ascomycota</taxon>
        <taxon>Saccharomycotina</taxon>
        <taxon>Saccharomycetes</taxon>
        <taxon>Saccharomycetales</taxon>
        <taxon>Saccharomycetaceae</taxon>
        <taxon>Nakaseomyces</taxon>
    </lineage>
</organism>
<dbReference type="EMBL" id="CR380948">
    <property type="protein sequence ID" value="CAG58020.1"/>
    <property type="molecule type" value="Genomic_DNA"/>
</dbReference>
<dbReference type="RefSeq" id="XP_445120.1">
    <property type="nucleotide sequence ID" value="XM_445120.1"/>
</dbReference>
<dbReference type="SMR" id="Q6FXJ5"/>
<dbReference type="FunCoup" id="Q6FXJ5">
    <property type="interactions" value="582"/>
</dbReference>
<dbReference type="STRING" id="284593.Q6FXJ5"/>
<dbReference type="EnsemblFungi" id="CAGL0B03421g-T">
    <property type="protein sequence ID" value="CAGL0B03421g-T-p1"/>
    <property type="gene ID" value="CAGL0B03421g"/>
</dbReference>
<dbReference type="KEGG" id="cgr:2886499"/>
<dbReference type="CGD" id="CAL0127688">
    <property type="gene designation" value="HAP1A"/>
</dbReference>
<dbReference type="VEuPathDB" id="FungiDB:CAGL0B03421g"/>
<dbReference type="eggNOG" id="ENOG502QRPQ">
    <property type="taxonomic scope" value="Eukaryota"/>
</dbReference>
<dbReference type="HOGENOM" id="CLU_004380_0_0_1"/>
<dbReference type="InParanoid" id="Q6FXJ5"/>
<dbReference type="OMA" id="TTRALFF"/>
<dbReference type="Proteomes" id="UP000002428">
    <property type="component" value="Chromosome B"/>
</dbReference>
<dbReference type="GO" id="GO:0005739">
    <property type="term" value="C:mitochondrion"/>
    <property type="evidence" value="ECO:0007669"/>
    <property type="project" value="EnsemblFungi"/>
</dbReference>
<dbReference type="GO" id="GO:0005634">
    <property type="term" value="C:nucleus"/>
    <property type="evidence" value="ECO:0007669"/>
    <property type="project" value="UniProtKB-SubCell"/>
</dbReference>
<dbReference type="GO" id="GO:0001228">
    <property type="term" value="F:DNA-binding transcription activator activity, RNA polymerase II-specific"/>
    <property type="evidence" value="ECO:0000314"/>
    <property type="project" value="CGD"/>
</dbReference>
<dbReference type="GO" id="GO:0001217">
    <property type="term" value="F:DNA-binding transcription repressor activity"/>
    <property type="evidence" value="ECO:0000314"/>
    <property type="project" value="CGD"/>
</dbReference>
<dbReference type="GO" id="GO:0000978">
    <property type="term" value="F:RNA polymerase II cis-regulatory region sequence-specific DNA binding"/>
    <property type="evidence" value="ECO:0007669"/>
    <property type="project" value="EnsemblFungi"/>
</dbReference>
<dbReference type="GO" id="GO:0008270">
    <property type="term" value="F:zinc ion binding"/>
    <property type="evidence" value="ECO:0007669"/>
    <property type="project" value="InterPro"/>
</dbReference>
<dbReference type="GO" id="GO:0071456">
    <property type="term" value="P:cellular response to hypoxia"/>
    <property type="evidence" value="ECO:0000270"/>
    <property type="project" value="CGD"/>
</dbReference>
<dbReference type="GO" id="GO:0006351">
    <property type="term" value="P:DNA-templated transcription"/>
    <property type="evidence" value="ECO:0000315"/>
    <property type="project" value="CGD"/>
</dbReference>
<dbReference type="GO" id="GO:0071169">
    <property type="term" value="P:establishment of protein localization to chromatin"/>
    <property type="evidence" value="ECO:0007669"/>
    <property type="project" value="EnsemblFungi"/>
</dbReference>
<dbReference type="GO" id="GO:0000122">
    <property type="term" value="P:negative regulation of transcription by RNA polymerase II"/>
    <property type="evidence" value="ECO:0007669"/>
    <property type="project" value="EnsemblFungi"/>
</dbReference>
<dbReference type="GO" id="GO:0043457">
    <property type="term" value="P:regulation of cellular respiration"/>
    <property type="evidence" value="ECO:0007669"/>
    <property type="project" value="EnsemblFungi"/>
</dbReference>
<dbReference type="CDD" id="cd12148">
    <property type="entry name" value="fungal_TF_MHR"/>
    <property type="match status" value="1"/>
</dbReference>
<dbReference type="CDD" id="cd00067">
    <property type="entry name" value="GAL4"/>
    <property type="match status" value="1"/>
</dbReference>
<dbReference type="FunFam" id="4.10.240.10:FF:000014">
    <property type="entry name" value="HAP1p Zinc finger transcription factor"/>
    <property type="match status" value="1"/>
</dbReference>
<dbReference type="Gene3D" id="1.20.5.170">
    <property type="match status" value="1"/>
</dbReference>
<dbReference type="Gene3D" id="4.10.240.10">
    <property type="entry name" value="Zn(2)-C6 fungal-type DNA-binding domain"/>
    <property type="match status" value="1"/>
</dbReference>
<dbReference type="InterPro" id="IPR046347">
    <property type="entry name" value="bZIP_sf"/>
</dbReference>
<dbReference type="InterPro" id="IPR051430">
    <property type="entry name" value="Fungal_TF_Env_Response"/>
</dbReference>
<dbReference type="InterPro" id="IPR007219">
    <property type="entry name" value="Transcription_factor_dom_fun"/>
</dbReference>
<dbReference type="InterPro" id="IPR036864">
    <property type="entry name" value="Zn2-C6_fun-type_DNA-bd_sf"/>
</dbReference>
<dbReference type="InterPro" id="IPR001138">
    <property type="entry name" value="Zn2Cys6_DnaBD"/>
</dbReference>
<dbReference type="PANTHER" id="PTHR31944">
    <property type="entry name" value="HEME-RESPONSIVE ZINC FINGER TRANSCRIPTION FACTOR HAP1"/>
    <property type="match status" value="1"/>
</dbReference>
<dbReference type="PANTHER" id="PTHR31944:SF131">
    <property type="entry name" value="HEME-RESPONSIVE ZINC FINGER TRANSCRIPTION FACTOR HAP1"/>
    <property type="match status" value="1"/>
</dbReference>
<dbReference type="Pfam" id="PF04082">
    <property type="entry name" value="Fungal_trans"/>
    <property type="match status" value="1"/>
</dbReference>
<dbReference type="Pfam" id="PF00172">
    <property type="entry name" value="Zn_clus"/>
    <property type="match status" value="1"/>
</dbReference>
<dbReference type="SMART" id="SM00906">
    <property type="entry name" value="Fungal_trans"/>
    <property type="match status" value="1"/>
</dbReference>
<dbReference type="SMART" id="SM00066">
    <property type="entry name" value="GAL4"/>
    <property type="match status" value="1"/>
</dbReference>
<dbReference type="SUPFAM" id="SSF57959">
    <property type="entry name" value="Leucine zipper domain"/>
    <property type="match status" value="1"/>
</dbReference>
<dbReference type="SUPFAM" id="SSF57701">
    <property type="entry name" value="Zn2/Cys6 DNA-binding domain"/>
    <property type="match status" value="1"/>
</dbReference>
<dbReference type="PROSITE" id="PS00463">
    <property type="entry name" value="ZN2_CY6_FUNGAL_1"/>
    <property type="match status" value="1"/>
</dbReference>
<dbReference type="PROSITE" id="PS50048">
    <property type="entry name" value="ZN2_CY6_FUNGAL_2"/>
    <property type="match status" value="1"/>
</dbReference>
<reference key="1">
    <citation type="journal article" date="2004" name="Nature">
        <title>Genome evolution in yeasts.</title>
        <authorList>
            <person name="Dujon B."/>
            <person name="Sherman D."/>
            <person name="Fischer G."/>
            <person name="Durrens P."/>
            <person name="Casaregola S."/>
            <person name="Lafontaine I."/>
            <person name="de Montigny J."/>
            <person name="Marck C."/>
            <person name="Neuveglise C."/>
            <person name="Talla E."/>
            <person name="Goffard N."/>
            <person name="Frangeul L."/>
            <person name="Aigle M."/>
            <person name="Anthouard V."/>
            <person name="Babour A."/>
            <person name="Barbe V."/>
            <person name="Barnay S."/>
            <person name="Blanchin S."/>
            <person name="Beckerich J.-M."/>
            <person name="Beyne E."/>
            <person name="Bleykasten C."/>
            <person name="Boisrame A."/>
            <person name="Boyer J."/>
            <person name="Cattolico L."/>
            <person name="Confanioleri F."/>
            <person name="de Daruvar A."/>
            <person name="Despons L."/>
            <person name="Fabre E."/>
            <person name="Fairhead C."/>
            <person name="Ferry-Dumazet H."/>
            <person name="Groppi A."/>
            <person name="Hantraye F."/>
            <person name="Hennequin C."/>
            <person name="Jauniaux N."/>
            <person name="Joyet P."/>
            <person name="Kachouri R."/>
            <person name="Kerrest A."/>
            <person name="Koszul R."/>
            <person name="Lemaire M."/>
            <person name="Lesur I."/>
            <person name="Ma L."/>
            <person name="Muller H."/>
            <person name="Nicaud J.-M."/>
            <person name="Nikolski M."/>
            <person name="Oztas S."/>
            <person name="Ozier-Kalogeropoulos O."/>
            <person name="Pellenz S."/>
            <person name="Potier S."/>
            <person name="Richard G.-F."/>
            <person name="Straub M.-L."/>
            <person name="Suleau A."/>
            <person name="Swennen D."/>
            <person name="Tekaia F."/>
            <person name="Wesolowski-Louvel M."/>
            <person name="Westhof E."/>
            <person name="Wirth B."/>
            <person name="Zeniou-Meyer M."/>
            <person name="Zivanovic Y."/>
            <person name="Bolotin-Fukuhara M."/>
            <person name="Thierry A."/>
            <person name="Bouchier C."/>
            <person name="Caudron B."/>
            <person name="Scarpelli C."/>
            <person name="Gaillardin C."/>
            <person name="Weissenbach J."/>
            <person name="Wincker P."/>
            <person name="Souciet J.-L."/>
        </authorList>
    </citation>
    <scope>NUCLEOTIDE SEQUENCE [LARGE SCALE GENOMIC DNA]</scope>
    <source>
        <strain>ATCC 2001 / BCRC 20586 / JCM 3761 / NBRC 0622 / NRRL Y-65 / CBS 138</strain>
    </source>
</reference>
<reference key="2">
    <citation type="journal article" date="2022" name="J. Fungi">
        <title>Characterization of the Candida glabrata transcription factor CgMar1: role in azole susceptibility.</title>
        <authorList>
            <person name="Pais P."/>
            <person name="Galocha M."/>
            <person name="California R."/>
            <person name="Viana R."/>
            <person name="Ola M."/>
            <person name="Okamoto M."/>
            <person name="Chibana H."/>
            <person name="Butler G."/>
            <person name="Teixeira M.C."/>
        </authorList>
    </citation>
    <scope>FUNCTION</scope>
    <scope>DISRUPTION PHENOTYPE</scope>
    <scope>DNA-BINDING</scope>
</reference>
<comment type="function">
    <text evidence="3">Transcription factor that contributes to plasma membrane sphingolipid incorporation and membrane permeability, decreasing fluconazole accumulation (PubMed:35050001). Regulates 337 genes under fluconazole stress, including several related to lipid biosynthesis pathways such as RSB1, encoding a sphingoid long-chain base efflux transporter (PubMed:35050001). Associates with the promoter of RSB1 in the region containing two 5'-CCCCTCC-3' motifs and increases its promoter occupancy upon fluconazole stress (PubMed:35050001).</text>
</comment>
<comment type="subcellular location">
    <subcellularLocation>
        <location evidence="1">Nucleus</location>
    </subcellularLocation>
</comment>
<comment type="disruption phenotype">
    <text evidence="3">Increases susceptibility to multiple azoles, including fluconazole.</text>
</comment>
<keyword id="KW-0238">DNA-binding</keyword>
<keyword id="KW-0479">Metal-binding</keyword>
<keyword id="KW-0539">Nucleus</keyword>
<keyword id="KW-1185">Reference proteome</keyword>
<keyword id="KW-0804">Transcription</keyword>
<keyword id="KW-0805">Transcription regulation</keyword>
<keyword id="KW-0862">Zinc</keyword>